<comment type="function">
    <text evidence="3">Transcription factor that may function in dorsoventral specification of the forebrain. Required for closure of the choroid fissure and together with vax1 is required for optic nerve differentiation and to limit retinal development to the optic cup.</text>
</comment>
<comment type="subcellular location">
    <subcellularLocation>
        <location evidence="1">Nucleus</location>
    </subcellularLocation>
</comment>
<comment type="tissue specificity">
    <text evidence="3">Expressed in the anterior neural keel and later in the preoptic area, optic stalk and ventral retina.</text>
</comment>
<comment type="developmental stage">
    <text evidence="3">By 7 somites, detected in the anterior brain and expression is strong within the optic stalks, preoptic area and telencephalon by 12 somites. By 16 somites, expression in the telencephalon is reduced but that in the preoptic area, optic stalk and ventral retina remains and this pattern of expression is similar at 24 hpf (hours post-fertilization). By 48 hpf, expression is restricted to the ventral preoptic area, anterior dorsal hypothalamus and ventral retina.</text>
</comment>
<comment type="similarity">
    <text evidence="4">Belongs to the EMX homeobox family.</text>
</comment>
<reference key="1">
    <citation type="journal article" date="2003" name="Development">
        <title>Hedgehog signalling maintains the optic stalk-retinal interface through the regulation of Vax gene activity.</title>
        <authorList>
            <person name="Take-uchi M."/>
            <person name="Clarke J.D.W."/>
            <person name="Wilson S.W."/>
        </authorList>
    </citation>
    <scope>NUCLEOTIDE SEQUENCE [MRNA]</scope>
    <scope>FUNCTION</scope>
    <scope>TISSUE SPECIFICITY</scope>
    <scope>DEVELOPMENTAL STAGE</scope>
</reference>
<keyword id="KW-0217">Developmental protein</keyword>
<keyword id="KW-0238">DNA-binding</keyword>
<keyword id="KW-0371">Homeobox</keyword>
<keyword id="KW-0539">Nucleus</keyword>
<keyword id="KW-1185">Reference proteome</keyword>
<keyword id="KW-0804">Transcription</keyword>
<keyword id="KW-0805">Transcription regulation</keyword>
<keyword id="KW-0879">Wnt signaling pathway</keyword>
<feature type="chain" id="PRO_0000240529" description="Ventral anterior homeobox 2">
    <location>
        <begin position="1"/>
        <end position="307"/>
    </location>
</feature>
<feature type="DNA-binding region" description="Homeobox" evidence="1">
    <location>
        <begin position="103"/>
        <end position="162"/>
    </location>
</feature>
<feature type="region of interest" description="Disordered" evidence="2">
    <location>
        <begin position="1"/>
        <end position="70"/>
    </location>
</feature>
<feature type="region of interest" description="Disordered" evidence="2">
    <location>
        <begin position="155"/>
        <end position="175"/>
    </location>
</feature>
<feature type="region of interest" description="Disordered" evidence="2">
    <location>
        <begin position="197"/>
        <end position="254"/>
    </location>
</feature>
<feature type="compositionally biased region" description="Basic and acidic residues" evidence="2">
    <location>
        <begin position="25"/>
        <end position="38"/>
    </location>
</feature>
<feature type="compositionally biased region" description="Low complexity" evidence="2">
    <location>
        <begin position="46"/>
        <end position="62"/>
    </location>
</feature>
<feature type="compositionally biased region" description="Basic and acidic residues" evidence="2">
    <location>
        <begin position="159"/>
        <end position="170"/>
    </location>
</feature>
<feature type="compositionally biased region" description="Low complexity" evidence="2">
    <location>
        <begin position="202"/>
        <end position="249"/>
    </location>
</feature>
<accession>Q801E1</accession>
<sequence length="307" mass="33156">MFDQATSMGDGIAEDRNHCGSNSLCRDRGRESKSRTEVGNRSPVQSSTDTPGTSASTPTSSSEDGHDKLLGVDPDYCRRILVRDAKGTIREIVLPKGLDLDRPKRTRTSFTAEQLYRLELEFQRCQYVVGRERTELARQLNLSETQVKVWFQNRRTKQKKDQTKDTDKRSSSTSESLATCNILRLLEQGRLLSVPAPPPNPLLAHPHPGNGSLLGSPSVSTSSGVSSSTTPPGAGSGTFGLSLSSLSGTPPSPRLGVPPPSLCFTMPLLSGAHHELPSGYGCGTSAFEPYMRIERKDGELGGKKTVS</sequence>
<organism>
    <name type="scientific">Danio rerio</name>
    <name type="common">Zebrafish</name>
    <name type="synonym">Brachydanio rerio</name>
    <dbReference type="NCBI Taxonomy" id="7955"/>
    <lineage>
        <taxon>Eukaryota</taxon>
        <taxon>Metazoa</taxon>
        <taxon>Chordata</taxon>
        <taxon>Craniata</taxon>
        <taxon>Vertebrata</taxon>
        <taxon>Euteleostomi</taxon>
        <taxon>Actinopterygii</taxon>
        <taxon>Neopterygii</taxon>
        <taxon>Teleostei</taxon>
        <taxon>Ostariophysi</taxon>
        <taxon>Cypriniformes</taxon>
        <taxon>Danionidae</taxon>
        <taxon>Danioninae</taxon>
        <taxon>Danio</taxon>
    </lineage>
</organism>
<evidence type="ECO:0000255" key="1">
    <source>
        <dbReference type="PROSITE-ProRule" id="PRU00108"/>
    </source>
</evidence>
<evidence type="ECO:0000256" key="2">
    <source>
        <dbReference type="SAM" id="MobiDB-lite"/>
    </source>
</evidence>
<evidence type="ECO:0000269" key="3">
    <source>
    </source>
</evidence>
<evidence type="ECO:0000305" key="4"/>
<name>VAX2_DANRE</name>
<gene>
    <name type="primary">vax2</name>
</gene>
<protein>
    <recommendedName>
        <fullName>Ventral anterior homeobox 2</fullName>
    </recommendedName>
</protein>
<dbReference type="EMBL" id="AY183363">
    <property type="protein sequence ID" value="AAO32142.1"/>
    <property type="molecule type" value="mRNA"/>
</dbReference>
<dbReference type="RefSeq" id="NP_919390.1">
    <property type="nucleotide sequence ID" value="NM_194409.1"/>
</dbReference>
<dbReference type="SMR" id="Q801E1"/>
<dbReference type="FunCoup" id="Q801E1">
    <property type="interactions" value="23"/>
</dbReference>
<dbReference type="STRING" id="7955.ENSDARP00000076061"/>
<dbReference type="PaxDb" id="7955-ENSDARP00000076061"/>
<dbReference type="Ensembl" id="ENSDART00000081620">
    <property type="protein sequence ID" value="ENSDARP00000076061"/>
    <property type="gene ID" value="ENSDARG00000058702"/>
</dbReference>
<dbReference type="GeneID" id="373869"/>
<dbReference type="KEGG" id="dre:373869"/>
<dbReference type="AGR" id="ZFIN:ZDB-GENE-030904-8"/>
<dbReference type="CTD" id="25806"/>
<dbReference type="ZFIN" id="ZDB-GENE-030904-8">
    <property type="gene designation" value="vax2"/>
</dbReference>
<dbReference type="eggNOG" id="KOG0843">
    <property type="taxonomic scope" value="Eukaryota"/>
</dbReference>
<dbReference type="HOGENOM" id="CLU_071850_1_0_1"/>
<dbReference type="InParanoid" id="Q801E1"/>
<dbReference type="OMA" id="MDKCHTE"/>
<dbReference type="OrthoDB" id="6159439at2759"/>
<dbReference type="PhylomeDB" id="Q801E1"/>
<dbReference type="TreeFam" id="TF319504"/>
<dbReference type="PRO" id="PR:Q801E1"/>
<dbReference type="Proteomes" id="UP000000437">
    <property type="component" value="Chromosome 7"/>
</dbReference>
<dbReference type="Bgee" id="ENSDARG00000058702">
    <property type="expression patterns" value="Expressed in optic cup and 13 other cell types or tissues"/>
</dbReference>
<dbReference type="ExpressionAtlas" id="Q801E1">
    <property type="expression patterns" value="baseline"/>
</dbReference>
<dbReference type="GO" id="GO:0005634">
    <property type="term" value="C:nucleus"/>
    <property type="evidence" value="ECO:0000318"/>
    <property type="project" value="GO_Central"/>
</dbReference>
<dbReference type="GO" id="GO:0000981">
    <property type="term" value="F:DNA-binding transcription factor activity, RNA polymerase II-specific"/>
    <property type="evidence" value="ECO:0000318"/>
    <property type="project" value="GO_Central"/>
</dbReference>
<dbReference type="GO" id="GO:0000978">
    <property type="term" value="F:RNA polymerase II cis-regulatory region sequence-specific DNA binding"/>
    <property type="evidence" value="ECO:0000318"/>
    <property type="project" value="GO_Central"/>
</dbReference>
<dbReference type="GO" id="GO:0043565">
    <property type="term" value="F:sequence-specific DNA binding"/>
    <property type="evidence" value="ECO:0000314"/>
    <property type="project" value="ZFIN"/>
</dbReference>
<dbReference type="GO" id="GO:0007420">
    <property type="term" value="P:brain development"/>
    <property type="evidence" value="ECO:0000318"/>
    <property type="project" value="GO_Central"/>
</dbReference>
<dbReference type="GO" id="GO:0007417">
    <property type="term" value="P:central nervous system development"/>
    <property type="evidence" value="ECO:0000318"/>
    <property type="project" value="GO_Central"/>
</dbReference>
<dbReference type="GO" id="GO:0061386">
    <property type="term" value="P:closure of optic fissure"/>
    <property type="evidence" value="ECO:0000315"/>
    <property type="project" value="ZFIN"/>
</dbReference>
<dbReference type="GO" id="GO:0030900">
    <property type="term" value="P:forebrain development"/>
    <property type="evidence" value="ECO:0000250"/>
    <property type="project" value="UniProtKB"/>
</dbReference>
<dbReference type="GO" id="GO:1902254">
    <property type="term" value="P:negative regulation of intrinsic apoptotic signaling pathway by p53 class mediator"/>
    <property type="evidence" value="ECO:0000316"/>
    <property type="project" value="ZFIN"/>
</dbReference>
<dbReference type="GO" id="GO:0030182">
    <property type="term" value="P:neuron differentiation"/>
    <property type="evidence" value="ECO:0000318"/>
    <property type="project" value="GO_Central"/>
</dbReference>
<dbReference type="GO" id="GO:0021554">
    <property type="term" value="P:optic nerve development"/>
    <property type="evidence" value="ECO:0000315"/>
    <property type="project" value="ZFIN"/>
</dbReference>
<dbReference type="GO" id="GO:0090259">
    <property type="term" value="P:regulation of retinal ganglion cell axon guidance"/>
    <property type="evidence" value="ECO:0000315"/>
    <property type="project" value="ZFIN"/>
</dbReference>
<dbReference type="GO" id="GO:0006357">
    <property type="term" value="P:regulation of transcription by RNA polymerase II"/>
    <property type="evidence" value="ECO:0000318"/>
    <property type="project" value="GO_Central"/>
</dbReference>
<dbReference type="GO" id="GO:0060041">
    <property type="term" value="P:retina development in camera-type eye"/>
    <property type="evidence" value="ECO:0000315"/>
    <property type="project" value="ZFIN"/>
</dbReference>
<dbReference type="GO" id="GO:0060042">
    <property type="term" value="P:retina morphogenesis in camera-type eye"/>
    <property type="evidence" value="ECO:0000316"/>
    <property type="project" value="ZFIN"/>
</dbReference>
<dbReference type="GO" id="GO:0016055">
    <property type="term" value="P:Wnt signaling pathway"/>
    <property type="evidence" value="ECO:0007669"/>
    <property type="project" value="UniProtKB-KW"/>
</dbReference>
<dbReference type="CDD" id="cd00086">
    <property type="entry name" value="homeodomain"/>
    <property type="match status" value="1"/>
</dbReference>
<dbReference type="FunFam" id="1.10.10.60:FF:000131">
    <property type="entry name" value="Ventral anterior homeobox 2"/>
    <property type="match status" value="1"/>
</dbReference>
<dbReference type="Gene3D" id="1.10.10.60">
    <property type="entry name" value="Homeodomain-like"/>
    <property type="match status" value="1"/>
</dbReference>
<dbReference type="InterPro" id="IPR050877">
    <property type="entry name" value="EMX-VAX-Noto_Homeobox_TFs"/>
</dbReference>
<dbReference type="InterPro" id="IPR001356">
    <property type="entry name" value="HD"/>
</dbReference>
<dbReference type="InterPro" id="IPR017970">
    <property type="entry name" value="Homeobox_CS"/>
</dbReference>
<dbReference type="InterPro" id="IPR009057">
    <property type="entry name" value="Homeodomain-like_sf"/>
</dbReference>
<dbReference type="InterPro" id="IPR000047">
    <property type="entry name" value="HTH_motif"/>
</dbReference>
<dbReference type="PANTHER" id="PTHR24339">
    <property type="entry name" value="HOMEOBOX PROTEIN EMX-RELATED"/>
    <property type="match status" value="1"/>
</dbReference>
<dbReference type="PANTHER" id="PTHR24339:SF34">
    <property type="entry name" value="VENTRAL ANTERIOR HOMEOBOX 2"/>
    <property type="match status" value="1"/>
</dbReference>
<dbReference type="Pfam" id="PF00046">
    <property type="entry name" value="Homeodomain"/>
    <property type="match status" value="1"/>
</dbReference>
<dbReference type="PRINTS" id="PR00031">
    <property type="entry name" value="HTHREPRESSR"/>
</dbReference>
<dbReference type="SMART" id="SM00389">
    <property type="entry name" value="HOX"/>
    <property type="match status" value="1"/>
</dbReference>
<dbReference type="SUPFAM" id="SSF46689">
    <property type="entry name" value="Homeodomain-like"/>
    <property type="match status" value="1"/>
</dbReference>
<dbReference type="PROSITE" id="PS00027">
    <property type="entry name" value="HOMEOBOX_1"/>
    <property type="match status" value="1"/>
</dbReference>
<dbReference type="PROSITE" id="PS50071">
    <property type="entry name" value="HOMEOBOX_2"/>
    <property type="match status" value="1"/>
</dbReference>
<proteinExistence type="evidence at transcript level"/>